<keyword id="KW-0007">Acetylation</keyword>
<keyword id="KW-0225">Disease variant</keyword>
<keyword id="KW-1015">Disulfide bond</keyword>
<keyword id="KW-0472">Membrane</keyword>
<keyword id="KW-0479">Metal-binding</keyword>
<keyword id="KW-0576">Peroxisome</keyword>
<keyword id="KW-0962">Peroxisome biogenesis</keyword>
<keyword id="KW-0958">Peroxisome biogenesis disorder</keyword>
<keyword id="KW-0653">Protein transport</keyword>
<keyword id="KW-1267">Proteomics identification</keyword>
<keyword id="KW-1185">Reference proteome</keyword>
<keyword id="KW-0808">Transferase</keyword>
<keyword id="KW-0812">Transmembrane</keyword>
<keyword id="KW-1133">Transmembrane helix</keyword>
<keyword id="KW-0813">Transport</keyword>
<keyword id="KW-0833">Ubl conjugation pathway</keyword>
<keyword id="KW-0861">Zellweger syndrome</keyword>
<keyword id="KW-0862">Zinc</keyword>
<keyword id="KW-0863">Zinc-finger</keyword>
<dbReference type="EC" id="2.3.2.27" evidence="16"/>
<dbReference type="EC" id="2.3.2.36" evidence="2"/>
<dbReference type="EMBL" id="M86852">
    <property type="protein sequence ID" value="AAC12785.1"/>
    <property type="molecule type" value="mRNA"/>
</dbReference>
<dbReference type="EMBL" id="AF133826">
    <property type="protein sequence ID" value="AAF97687.1"/>
    <property type="molecule type" value="Genomic_DNA"/>
</dbReference>
<dbReference type="EMBL" id="M85038">
    <property type="protein sequence ID" value="AAA60141.1"/>
    <property type="molecule type" value="mRNA"/>
</dbReference>
<dbReference type="EMBL" id="AC090810">
    <property type="status" value="NOT_ANNOTATED_CDS"/>
    <property type="molecule type" value="Genomic_DNA"/>
</dbReference>
<dbReference type="EMBL" id="BC000661">
    <property type="status" value="NOT_ANNOTATED_CDS"/>
    <property type="molecule type" value="mRNA"/>
</dbReference>
<dbReference type="EMBL" id="BC005375">
    <property type="protein sequence ID" value="AAH05375.1"/>
    <property type="molecule type" value="mRNA"/>
</dbReference>
<dbReference type="EMBL" id="BC093043">
    <property type="protein sequence ID" value="AAH93043.1"/>
    <property type="molecule type" value="mRNA"/>
</dbReference>
<dbReference type="CCDS" id="CCDS6221.1"/>
<dbReference type="PIR" id="A41812">
    <property type="entry name" value="A41812"/>
</dbReference>
<dbReference type="RefSeq" id="NP_000309.2">
    <property type="nucleotide sequence ID" value="NM_000318.3"/>
</dbReference>
<dbReference type="RefSeq" id="NP_001073336.2">
    <property type="nucleotide sequence ID" value="NM_001079867.2"/>
</dbReference>
<dbReference type="RefSeq" id="NP_001165557.2">
    <property type="nucleotide sequence ID" value="NM_001172086.2"/>
</dbReference>
<dbReference type="RefSeq" id="NP_001165558.2">
    <property type="nucleotide sequence ID" value="NM_001172087.2"/>
</dbReference>
<dbReference type="SMR" id="P28328"/>
<dbReference type="BioGRID" id="111786">
    <property type="interactions" value="22"/>
</dbReference>
<dbReference type="ComplexPortal" id="CPX-2649">
    <property type="entry name" value="PEX2-PEX10-PEX12 E3 ubiquitin ligase complex"/>
</dbReference>
<dbReference type="FunCoup" id="P28328">
    <property type="interactions" value="1651"/>
</dbReference>
<dbReference type="IntAct" id="P28328">
    <property type="interactions" value="25"/>
</dbReference>
<dbReference type="MINT" id="P28328"/>
<dbReference type="STRING" id="9606.ENSP00000349543"/>
<dbReference type="ChEMBL" id="CHEMBL5465285"/>
<dbReference type="TCDB" id="3.A.20.1.1">
    <property type="family name" value="the peroxisomal protein importer (ppi) family"/>
</dbReference>
<dbReference type="iPTMnet" id="P28328"/>
<dbReference type="PhosphoSitePlus" id="P28328"/>
<dbReference type="BioMuta" id="PEX2"/>
<dbReference type="DMDM" id="281185478"/>
<dbReference type="jPOST" id="P28328"/>
<dbReference type="MassIVE" id="P28328"/>
<dbReference type="PaxDb" id="9606-ENSP00000349543"/>
<dbReference type="PeptideAtlas" id="P28328"/>
<dbReference type="ProteomicsDB" id="54465"/>
<dbReference type="Pumba" id="P28328"/>
<dbReference type="Antibodypedia" id="2570">
    <property type="antibodies" value="236 antibodies from 33 providers"/>
</dbReference>
<dbReference type="DNASU" id="5828"/>
<dbReference type="Ensembl" id="ENST00000357039.9">
    <property type="protein sequence ID" value="ENSP00000349543.4"/>
    <property type="gene ID" value="ENSG00000164751.15"/>
</dbReference>
<dbReference type="Ensembl" id="ENST00000520103.5">
    <property type="protein sequence ID" value="ENSP00000428590.1"/>
    <property type="gene ID" value="ENSG00000164751.15"/>
</dbReference>
<dbReference type="Ensembl" id="ENST00000522527.5">
    <property type="protein sequence ID" value="ENSP00000428638.1"/>
    <property type="gene ID" value="ENSG00000164751.15"/>
</dbReference>
<dbReference type="GeneID" id="5828"/>
<dbReference type="KEGG" id="hsa:5828"/>
<dbReference type="MANE-Select" id="ENST00000357039.9">
    <property type="protein sequence ID" value="ENSP00000349543.4"/>
    <property type="RefSeq nucleotide sequence ID" value="NM_000318.3"/>
    <property type="RefSeq protein sequence ID" value="NP_000309.2"/>
</dbReference>
<dbReference type="UCSC" id="uc003yax.4">
    <property type="organism name" value="human"/>
</dbReference>
<dbReference type="AGR" id="HGNC:9717"/>
<dbReference type="CTD" id="5828"/>
<dbReference type="DisGeNET" id="5828"/>
<dbReference type="GeneCards" id="PEX2"/>
<dbReference type="GeneReviews" id="PEX2"/>
<dbReference type="HGNC" id="HGNC:9717">
    <property type="gene designation" value="PEX2"/>
</dbReference>
<dbReference type="HPA" id="ENSG00000164751">
    <property type="expression patterns" value="Low tissue specificity"/>
</dbReference>
<dbReference type="MalaCards" id="PEX2"/>
<dbReference type="MIM" id="170993">
    <property type="type" value="gene"/>
</dbReference>
<dbReference type="MIM" id="614866">
    <property type="type" value="phenotype"/>
</dbReference>
<dbReference type="MIM" id="614867">
    <property type="type" value="phenotype"/>
</dbReference>
<dbReference type="neXtProt" id="NX_P28328"/>
<dbReference type="OpenTargets" id="ENSG00000164751"/>
<dbReference type="Orphanet" id="642965">
    <property type="disease" value="Autosomal recessive ataxia due to PEX2 deficiency"/>
</dbReference>
<dbReference type="Orphanet" id="772">
    <property type="disease" value="Infantile Refsum disease"/>
</dbReference>
<dbReference type="Orphanet" id="44">
    <property type="disease" value="Neonatal adrenoleukodystrophy"/>
</dbReference>
<dbReference type="Orphanet" id="912">
    <property type="disease" value="Zellweger syndrome"/>
</dbReference>
<dbReference type="PharmGKB" id="PA34060"/>
<dbReference type="VEuPathDB" id="HostDB:ENSG00000164751"/>
<dbReference type="eggNOG" id="KOG2879">
    <property type="taxonomic scope" value="Eukaryota"/>
</dbReference>
<dbReference type="GeneTree" id="ENSGT00390000001846"/>
<dbReference type="HOGENOM" id="CLU_024591_3_1_1"/>
<dbReference type="InParanoid" id="P28328"/>
<dbReference type="OMA" id="WHGLMEL"/>
<dbReference type="OrthoDB" id="1701437at2759"/>
<dbReference type="PAN-GO" id="P28328">
    <property type="GO annotations" value="5 GO annotations based on evolutionary models"/>
</dbReference>
<dbReference type="PhylomeDB" id="P28328"/>
<dbReference type="TreeFam" id="TF105312"/>
<dbReference type="PathwayCommons" id="P28328"/>
<dbReference type="Reactome" id="R-HSA-8866654">
    <property type="pathway name" value="E3 ubiquitin ligases ubiquitinate target proteins"/>
</dbReference>
<dbReference type="Reactome" id="R-HSA-9033241">
    <property type="pathway name" value="Peroxisomal protein import"/>
</dbReference>
<dbReference type="Reactome" id="R-HSA-9603798">
    <property type="pathway name" value="Class I peroxisomal membrane protein import"/>
</dbReference>
<dbReference type="SignaLink" id="P28328"/>
<dbReference type="SIGNOR" id="P28328"/>
<dbReference type="UniPathway" id="UPA00143"/>
<dbReference type="BioGRID-ORCS" id="5828">
    <property type="hits" value="35 hits in 1194 CRISPR screens"/>
</dbReference>
<dbReference type="ChiTaRS" id="PEX2">
    <property type="organism name" value="human"/>
</dbReference>
<dbReference type="GeneWiki" id="PXMP3"/>
<dbReference type="GenomeRNAi" id="5828"/>
<dbReference type="Pharos" id="P28328">
    <property type="development level" value="Tbio"/>
</dbReference>
<dbReference type="PRO" id="PR:P28328"/>
<dbReference type="Proteomes" id="UP000005640">
    <property type="component" value="Chromosome 8"/>
</dbReference>
<dbReference type="RNAct" id="P28328">
    <property type="molecule type" value="protein"/>
</dbReference>
<dbReference type="Bgee" id="ENSG00000164751">
    <property type="expression patterns" value="Expressed in seminal vesicle and 203 other cell types or tissues"/>
</dbReference>
<dbReference type="ExpressionAtlas" id="P28328">
    <property type="expression patterns" value="baseline and differential"/>
</dbReference>
<dbReference type="GO" id="GO:0016593">
    <property type="term" value="C:Cdc73/Paf1 complex"/>
    <property type="evidence" value="ECO:0000314"/>
    <property type="project" value="UniProtKB"/>
</dbReference>
<dbReference type="GO" id="GO:0005829">
    <property type="term" value="C:cytosol"/>
    <property type="evidence" value="ECO:0000304"/>
    <property type="project" value="Reactome"/>
</dbReference>
<dbReference type="GO" id="GO:0043231">
    <property type="term" value="C:intracellular membrane-bounded organelle"/>
    <property type="evidence" value="ECO:0000314"/>
    <property type="project" value="HPA"/>
</dbReference>
<dbReference type="GO" id="GO:0016020">
    <property type="term" value="C:membrane"/>
    <property type="evidence" value="ECO:0007005"/>
    <property type="project" value="UniProtKB"/>
</dbReference>
<dbReference type="GO" id="GO:0005654">
    <property type="term" value="C:nucleoplasm"/>
    <property type="evidence" value="ECO:0000314"/>
    <property type="project" value="HPA"/>
</dbReference>
<dbReference type="GO" id="GO:0005778">
    <property type="term" value="C:peroxisomal membrane"/>
    <property type="evidence" value="ECO:0000314"/>
    <property type="project" value="UniProt"/>
</dbReference>
<dbReference type="GO" id="GO:0008320">
    <property type="term" value="F:protein transmembrane transporter activity"/>
    <property type="evidence" value="ECO:0000250"/>
    <property type="project" value="UniProt"/>
</dbReference>
<dbReference type="GO" id="GO:0061630">
    <property type="term" value="F:ubiquitin protein ligase activity"/>
    <property type="evidence" value="ECO:0000314"/>
    <property type="project" value="UniProtKB"/>
</dbReference>
<dbReference type="GO" id="GO:0008270">
    <property type="term" value="F:zinc ion binding"/>
    <property type="evidence" value="ECO:0007669"/>
    <property type="project" value="UniProtKB-KW"/>
</dbReference>
<dbReference type="GO" id="GO:0034614">
    <property type="term" value="P:cellular response to reactive oxygen species"/>
    <property type="evidence" value="ECO:0000314"/>
    <property type="project" value="UniProt"/>
</dbReference>
<dbReference type="GO" id="GO:0006635">
    <property type="term" value="P:fatty acid beta-oxidation"/>
    <property type="evidence" value="ECO:0000315"/>
    <property type="project" value="UniProtKB"/>
</dbReference>
<dbReference type="GO" id="GO:0050680">
    <property type="term" value="P:negative regulation of epithelial cell proliferation"/>
    <property type="evidence" value="ECO:0000315"/>
    <property type="project" value="UniProtKB"/>
</dbReference>
<dbReference type="GO" id="GO:0048147">
    <property type="term" value="P:negative regulation of fibroblast proliferation"/>
    <property type="evidence" value="ECO:0000315"/>
    <property type="project" value="UniProtKB"/>
</dbReference>
<dbReference type="GO" id="GO:0007031">
    <property type="term" value="P:peroxisome organization"/>
    <property type="evidence" value="ECO:0000315"/>
    <property type="project" value="UniProtKB"/>
</dbReference>
<dbReference type="GO" id="GO:0000425">
    <property type="term" value="P:pexophagy"/>
    <property type="evidence" value="ECO:0000314"/>
    <property type="project" value="UniProtKB"/>
</dbReference>
<dbReference type="GO" id="GO:0031648">
    <property type="term" value="P:protein destabilization"/>
    <property type="evidence" value="ECO:0000315"/>
    <property type="project" value="UniProtKB"/>
</dbReference>
<dbReference type="GO" id="GO:0016558">
    <property type="term" value="P:protein import into peroxisome matrix"/>
    <property type="evidence" value="ECO:0000315"/>
    <property type="project" value="UniProtKB"/>
</dbReference>
<dbReference type="GO" id="GO:0016562">
    <property type="term" value="P:protein import into peroxisome matrix, receptor recycling"/>
    <property type="evidence" value="ECO:0000314"/>
    <property type="project" value="UniProtKB"/>
</dbReference>
<dbReference type="GO" id="GO:0044721">
    <property type="term" value="P:protein import into peroxisome matrix, substrate release"/>
    <property type="evidence" value="ECO:0000250"/>
    <property type="project" value="UniProt"/>
</dbReference>
<dbReference type="GO" id="GO:0006513">
    <property type="term" value="P:protein monoubiquitination"/>
    <property type="evidence" value="ECO:0000314"/>
    <property type="project" value="UniProt"/>
</dbReference>
<dbReference type="GO" id="GO:1990928">
    <property type="term" value="P:response to amino acid starvation"/>
    <property type="evidence" value="ECO:0000314"/>
    <property type="project" value="UniProtKB"/>
</dbReference>
<dbReference type="GO" id="GO:0000038">
    <property type="term" value="P:very long-chain fatty acid metabolic process"/>
    <property type="evidence" value="ECO:0000315"/>
    <property type="project" value="UniProtKB"/>
</dbReference>
<dbReference type="CDD" id="cd16526">
    <property type="entry name" value="RING-HC_PEX2"/>
    <property type="match status" value="1"/>
</dbReference>
<dbReference type="FunFam" id="3.30.40.10:FF:000480">
    <property type="entry name" value="Peroxisome biogenesis factor 2"/>
    <property type="match status" value="1"/>
</dbReference>
<dbReference type="Gene3D" id="3.30.40.10">
    <property type="entry name" value="Zinc/RING finger domain, C3HC4 (zinc finger)"/>
    <property type="match status" value="1"/>
</dbReference>
<dbReference type="InterPro" id="IPR025654">
    <property type="entry name" value="PEX2/10"/>
</dbReference>
<dbReference type="InterPro" id="IPR006845">
    <property type="entry name" value="Pex_N"/>
</dbReference>
<dbReference type="InterPro" id="IPR045859">
    <property type="entry name" value="RING-HC_PEX2"/>
</dbReference>
<dbReference type="InterPro" id="IPR001841">
    <property type="entry name" value="Znf_RING"/>
</dbReference>
<dbReference type="InterPro" id="IPR013083">
    <property type="entry name" value="Znf_RING/FYVE/PHD"/>
</dbReference>
<dbReference type="InterPro" id="IPR017907">
    <property type="entry name" value="Znf_RING_CS"/>
</dbReference>
<dbReference type="PANTHER" id="PTHR48178">
    <property type="entry name" value="PEROXISOME BIOGENESIS FACTOR 2"/>
    <property type="match status" value="1"/>
</dbReference>
<dbReference type="PANTHER" id="PTHR48178:SF1">
    <property type="entry name" value="PEROXISOME BIOGENESIS FACTOR 2"/>
    <property type="match status" value="1"/>
</dbReference>
<dbReference type="Pfam" id="PF04757">
    <property type="entry name" value="Pex2_Pex12"/>
    <property type="match status" value="1"/>
</dbReference>
<dbReference type="SMART" id="SM00184">
    <property type="entry name" value="RING"/>
    <property type="match status" value="1"/>
</dbReference>
<dbReference type="SUPFAM" id="SSF57850">
    <property type="entry name" value="RING/U-box"/>
    <property type="match status" value="1"/>
</dbReference>
<dbReference type="PROSITE" id="PS00518">
    <property type="entry name" value="ZF_RING_1"/>
    <property type="match status" value="1"/>
</dbReference>
<dbReference type="PROSITE" id="PS50089">
    <property type="entry name" value="ZF_RING_2"/>
    <property type="match status" value="1"/>
</dbReference>
<comment type="function">
    <text evidence="2 14 15 16">E3 ubiquitin-protein ligase component of a retrotranslocation channel required for peroxisome organization by mediating export of the PEX5 receptor from peroxisomes to the cytosol, thereby promoting PEX5 recycling (PubMed:24662292). The retrotranslocation channel is composed of PEX2, PEX10 and PEX12; each subunit contributing transmembrane segments that coassemble into an open channel that specifically allows the passage of PEX5 through the peroxisomal membrane (By similarity). PEX2 also regulates peroxisome organization by acting as a E3 ubiquitin-protein ligase (By similarity). PEX2 ubiquitinates PEX5 during its passage through the retrotranslocation channel: catalyzes monoubiquitination of PEX5 at 'Cys-11', a modification that acts as a signal for PEX5 extraction into the cytosol (By similarity). Required for pexophagy in response to starvation by mediating ubiquitination of peroxisomal proteins, such as PEX5 and ABCD3/PMP70 (PubMed:27597759). Also involved in the response to reactive oxygen species (ROS) by mediating 'Lys-48'-linked polyubiquitination and subsequent degradation of PNPLA2/ATGL, thereby regulating lipolysis (PubMed:34903883).</text>
</comment>
<comment type="catalytic activity">
    <reaction evidence="2">
        <text>[E2 ubiquitin-conjugating enzyme]-S-ubiquitinyl-L-cysteine + [acceptor protein]-L-cysteine = [E2 ubiquitin-conjugating enzyme]-L-cysteine + [acceptor protein]-S-ubiquitinyl-L-cysteine.</text>
        <dbReference type="EC" id="2.3.2.36"/>
    </reaction>
</comment>
<comment type="catalytic activity">
    <reaction evidence="16">
        <text>S-ubiquitinyl-[E2 ubiquitin-conjugating enzyme]-L-cysteine + [acceptor protein]-L-lysine = [E2 ubiquitin-conjugating enzyme]-L-cysteine + N(6)-ubiquitinyl-[acceptor protein]-L-lysine.</text>
        <dbReference type="EC" id="2.3.2.27"/>
    </reaction>
</comment>
<comment type="pathway">
    <text evidence="14 15">Protein modification; protein ubiquitination.</text>
</comment>
<comment type="subunit">
    <text evidence="14">Component of the PEX2-PEX10-PEX12 retrotranslocation channel, composed of PEX2, PEX10 and PEX12.</text>
</comment>
<comment type="interaction">
    <interactant intactId="EBI-713978">
        <id>P28328</id>
    </interactant>
    <interactant intactId="EBI-594747">
        <id>P40855</id>
        <label>PEX19</label>
    </interactant>
    <organismsDiffer>false</organismsDiffer>
    <experiments>4</experiments>
</comment>
<comment type="subcellular location">
    <subcellularLocation>
        <location evidence="7">Peroxisome membrane</location>
        <topology evidence="3">Multi-pass membrane protein</topology>
    </subcellularLocation>
</comment>
<comment type="domain">
    <text evidence="1">The three subunits of the retrotranslocation channel (PEX2, PEX10 and PEX12) coassemble in the membrane into a channel with an open 10 Angstrom pore (By similarity). The RING-type zinc-fingers that catalyze PEX5 receptor ubiquitination are positioned above the pore on the cytosolic side of the complex (By similarity).</text>
</comment>
<comment type="PTM">
    <text evidence="16">Forms intramolecular and intermolecular disulfide bonds in response to reactive oxygen species (ROS), promoting higher stability.</text>
</comment>
<comment type="disease">
    <disease id="DI-00916">
        <name>Peroxisome biogenesis disorder complementation group 5</name>
        <acronym>PBD-CG5</acronym>
        <description>A peroxisomal disorder arising from a failure of protein import into the peroxisomal membrane or matrix. The peroxisome biogenesis disorders (PBD group) are genetically heterogeneous with at least 14 distinct genetic groups as concluded from complementation studies. Include disorders are: Zellweger syndrome (ZWS), neonatal adrenoleukodystrophy (NALD), infantile Refsum disease (IRD), and classical rhizomelic chondrodysplasia punctata (RCDP). ZWS, NALD and IRD are distinct from RCDP and constitute a clinical continuum of overlapping phenotypes known as the Zellweger spectrum (PBD-ZSS).</description>
        <dbReference type="MIM" id="614866"/>
    </disease>
    <text>The disease is caused by variants affecting the gene represented in this entry.</text>
</comment>
<comment type="disease" evidence="8 9 11">
    <disease id="DI-03583">
        <name>Peroxisome biogenesis disorder 5A</name>
        <acronym>PBD5A</acronym>
        <description>A fatal peroxisome biogenesis disorder belonging to the Zellweger disease spectrum and clinically characterized by severe neurologic dysfunction with profound psychomotor retardation, severe hypotonia and neonatal seizures, craniofacial abnormalities, liver dysfunction, and biochemically by the absence of peroxisomes. Additional features include cardiovascular and skeletal defects, renal cysts, ocular abnormalities, and hearing impairment. Most severely affected individuals with the classic form of the disease (classic Zellweger syndrome) die within the first year of life.</description>
        <dbReference type="MIM" id="614866"/>
    </disease>
    <text>The disease is caused by variants affecting the gene represented in this entry.</text>
</comment>
<comment type="disease" evidence="5 8 12 13">
    <disease id="DI-03584">
        <name>Peroxisome biogenesis disorder 5B</name>
        <acronym>PBD5B</acronym>
        <description>A peroxisome biogenesis disorder that includes neonatal adrenoleukodystrophy (NALD) and infantile Refsum disease (IRD), two milder manifestations of the Zellweger disease spectrum. The clinical course of patients with the NALD and IRD presentation is variable and may include developmental delay, hypotonia, liver dysfunction, sensorineural hearing loss, retinal dystrophy and vision impairment. Children with the NALD presentation may reach their teens, while patients with the IRD presentation may reach adulthood. The clinical conditions are often slowly progressive in particular with respect to loss of hearing and vision. The biochemical abnormalities include accumulation of phytanic acid, very long chain fatty acids (VLCFA), di- and trihydroxycholestanoic acid and pipecolic acid.</description>
        <dbReference type="MIM" id="614867"/>
    </disease>
    <text>The disease is caused by variants affecting the gene represented in this entry.</text>
</comment>
<comment type="similarity">
    <text evidence="20">Belongs to the pex2/pex10/pex12 family.</text>
</comment>
<accession>P28328</accession>
<accession>Q567S6</accession>
<accession>Q9BW41</accession>
<organism>
    <name type="scientific">Homo sapiens</name>
    <name type="common">Human</name>
    <dbReference type="NCBI Taxonomy" id="9606"/>
    <lineage>
        <taxon>Eukaryota</taxon>
        <taxon>Metazoa</taxon>
        <taxon>Chordata</taxon>
        <taxon>Craniata</taxon>
        <taxon>Vertebrata</taxon>
        <taxon>Euteleostomi</taxon>
        <taxon>Mammalia</taxon>
        <taxon>Eutheria</taxon>
        <taxon>Euarchontoglires</taxon>
        <taxon>Primates</taxon>
        <taxon>Haplorrhini</taxon>
        <taxon>Catarrhini</taxon>
        <taxon>Hominidae</taxon>
        <taxon>Homo</taxon>
    </lineage>
</organism>
<gene>
    <name evidence="18 21" type="primary">PEX2</name>
    <name evidence="19" type="synonym">PAF1</name>
    <name type="synonym">PMP3</name>
    <name type="synonym">PMP35</name>
    <name type="synonym">PXMP3</name>
    <name type="synonym">RNF72</name>
</gene>
<protein>
    <recommendedName>
        <fullName evidence="20">Peroxisome biogenesis factor 2</fullName>
        <ecNumber evidence="16">2.3.2.27</ecNumber>
        <ecNumber evidence="2">2.3.2.36</ecNumber>
    </recommendedName>
    <alternativeName>
        <fullName evidence="18">35 kDa peroxisomal membrane protein</fullName>
    </alternativeName>
    <alternativeName>
        <fullName evidence="20">Peroxin-2</fullName>
    </alternativeName>
    <alternativeName>
        <fullName>Peroxisomal membrane protein 3</fullName>
    </alternativeName>
    <alternativeName>
        <fullName evidence="19">Peroxisome assembly factor 1</fullName>
        <shortName evidence="19">PAF-1</shortName>
    </alternativeName>
    <alternativeName>
        <fullName>RING finger protein 72</fullName>
    </alternativeName>
</protein>
<evidence type="ECO:0000250" key="1">
    <source>
        <dbReference type="UniProtKB" id="G2Q1C9"/>
    </source>
</evidence>
<evidence type="ECO:0000250" key="2">
    <source>
        <dbReference type="UniProtKB" id="P32800"/>
    </source>
</evidence>
<evidence type="ECO:0000255" key="3"/>
<evidence type="ECO:0000255" key="4">
    <source>
        <dbReference type="PROSITE-ProRule" id="PRU00175"/>
    </source>
</evidence>
<evidence type="ECO:0000269" key="5">
    <source>
    </source>
</evidence>
<evidence type="ECO:0000269" key="6">
    <source>
    </source>
</evidence>
<evidence type="ECO:0000269" key="7">
    <source>
    </source>
</evidence>
<evidence type="ECO:0000269" key="8">
    <source>
    </source>
</evidence>
<evidence type="ECO:0000269" key="9">
    <source>
    </source>
</evidence>
<evidence type="ECO:0000269" key="10">
    <source>
    </source>
</evidence>
<evidence type="ECO:0000269" key="11">
    <source>
    </source>
</evidence>
<evidence type="ECO:0000269" key="12">
    <source>
    </source>
</evidence>
<evidence type="ECO:0000269" key="13">
    <source>
    </source>
</evidence>
<evidence type="ECO:0000269" key="14">
    <source>
    </source>
</evidence>
<evidence type="ECO:0000269" key="15">
    <source>
    </source>
</evidence>
<evidence type="ECO:0000269" key="16">
    <source>
    </source>
</evidence>
<evidence type="ECO:0000269" key="17">
    <source ref="3"/>
</evidence>
<evidence type="ECO:0000303" key="18">
    <source>
    </source>
</evidence>
<evidence type="ECO:0000303" key="19">
    <source>
    </source>
</evidence>
<evidence type="ECO:0000305" key="20"/>
<evidence type="ECO:0000312" key="21">
    <source>
        <dbReference type="HGNC" id="HGNC:9717"/>
    </source>
</evidence>
<evidence type="ECO:0007744" key="22">
    <source>
    </source>
</evidence>
<sequence>MASRKENAKSANRVLRISQLDALELNKALEQLVWSQFTQCFHGFKPGLLARFEPEVKACLWVFLWRFTIYSKNATVGQSVLNIKYKNDFSPNLRYQPPSKNQKIWYAVCTIGGRWLEERCYDLFRNHHLASFGKVKQCVNFVIGLLKLGGLINFLIFLQRGKFATLTERLLGIHSVFCKPQNICEVGFEYMNRELLWHGFAEFLIFLLPLINVQKLKAKLSSWCIPLTGAPNSDNTLATSGKECALCGEWPTMPHTIGCEHIFCYFCAKSSFLFDVYFTCPKCGTEVHSLQPLKSGIEMSEVNAL</sequence>
<feature type="chain" id="PRO_0000056369" description="Peroxisome biogenesis factor 2">
    <location>
        <begin position="1"/>
        <end position="305"/>
    </location>
</feature>
<feature type="topological domain" description="Peroxisomal matrix" evidence="1">
    <location>
        <begin position="1"/>
        <end position="15"/>
    </location>
</feature>
<feature type="transmembrane region" description="Helical; Name=TM1" evidence="1">
    <location>
        <begin position="16"/>
        <end position="42"/>
    </location>
</feature>
<feature type="topological domain" description="Cytoplasmic" evidence="1">
    <location>
        <begin position="43"/>
        <end position="48"/>
    </location>
</feature>
<feature type="transmembrane region" description="Helical; Name=TM2" evidence="1">
    <location>
        <begin position="49"/>
        <end position="74"/>
    </location>
</feature>
<feature type="topological domain" description="Peroxisomal matrix" evidence="1">
    <location>
        <begin position="75"/>
        <end position="98"/>
    </location>
</feature>
<feature type="transmembrane region" description="Helical; Name=TM3" evidence="1">
    <location>
        <begin position="99"/>
        <end position="125"/>
    </location>
</feature>
<feature type="topological domain" description="Cytoplasmic" evidence="1">
    <location>
        <begin position="126"/>
        <end position="133"/>
    </location>
</feature>
<feature type="transmembrane region" description="Helical; Name=TM4" evidence="1">
    <location>
        <begin position="134"/>
        <end position="160"/>
    </location>
</feature>
<feature type="topological domain" description="Peroxisomal matrix" evidence="1">
    <location>
        <begin position="161"/>
        <end position="187"/>
    </location>
</feature>
<feature type="transmembrane region" description="Helical; Name=TM5" evidence="1">
    <location>
        <begin position="188"/>
        <end position="211"/>
    </location>
</feature>
<feature type="topological domain" description="Cytoplasmic" evidence="1">
    <location>
        <begin position="212"/>
        <end position="305"/>
    </location>
</feature>
<feature type="zinc finger region" description="RING-type" evidence="4">
    <location>
        <begin position="244"/>
        <end position="284"/>
    </location>
</feature>
<feature type="binding site" evidence="1">
    <location>
        <position position="244"/>
    </location>
    <ligand>
        <name>Zn(2+)</name>
        <dbReference type="ChEBI" id="CHEBI:29105"/>
        <label>1</label>
    </ligand>
</feature>
<feature type="binding site" evidence="1">
    <location>
        <position position="247"/>
    </location>
    <ligand>
        <name>Zn(2+)</name>
        <dbReference type="ChEBI" id="CHEBI:29105"/>
        <label>1</label>
    </ligand>
</feature>
<feature type="binding site" evidence="1">
    <location>
        <position position="259"/>
    </location>
    <ligand>
        <name>Zn(2+)</name>
        <dbReference type="ChEBI" id="CHEBI:29105"/>
        <label>2</label>
    </ligand>
</feature>
<feature type="binding site" evidence="1">
    <location>
        <position position="261"/>
    </location>
    <ligand>
        <name>Zn(2+)</name>
        <dbReference type="ChEBI" id="CHEBI:29105"/>
        <label>2</label>
    </ligand>
</feature>
<feature type="binding site" evidence="1">
    <location>
        <position position="264"/>
    </location>
    <ligand>
        <name>Zn(2+)</name>
        <dbReference type="ChEBI" id="CHEBI:29105"/>
        <label>1</label>
    </ligand>
</feature>
<feature type="binding site" evidence="1">
    <location>
        <position position="267"/>
    </location>
    <ligand>
        <name>Zn(2+)</name>
        <dbReference type="ChEBI" id="CHEBI:29105"/>
        <label>1</label>
    </ligand>
</feature>
<feature type="binding site" evidence="1">
    <location>
        <position position="280"/>
    </location>
    <ligand>
        <name>Zn(2+)</name>
        <dbReference type="ChEBI" id="CHEBI:29105"/>
        <label>2</label>
    </ligand>
</feature>
<feature type="binding site" evidence="1">
    <location>
        <position position="283"/>
    </location>
    <ligand>
        <name>Zn(2+)</name>
        <dbReference type="ChEBI" id="CHEBI:29105"/>
        <label>2</label>
    </ligand>
</feature>
<feature type="modified residue" description="N6-acetyllysine" evidence="22">
    <location>
        <position position="84"/>
    </location>
</feature>
<feature type="sequence variant" id="VAR_087141" description="In PBD5A." evidence="11">
    <location>
        <begin position="39"/>
        <end position="305"/>
    </location>
</feature>
<feature type="sequence variant" id="VAR_011389" description="In PBD5B; infantile Refsum disease; dbSNP:rs61752119." evidence="5">
    <original>E</original>
    <variation>K</variation>
    <location>
        <position position="55"/>
    </location>
</feature>
<feature type="sequence variant" id="VAR_087142" description="In PBD5B and PBD5A." evidence="8 13">
    <location>
        <begin position="119"/>
        <end position="305"/>
    </location>
</feature>
<feature type="sequence variant" id="VAR_060784" description="In dbSNP:rs10087163." evidence="6 9 10 17">
    <original>C</original>
    <variation>R</variation>
    <location>
        <position position="184"/>
    </location>
</feature>
<feature type="sequence variant" id="VAR_087143" description="In PBD5B." evidence="8">
    <location>
        <begin position="223"/>
        <end position="305"/>
    </location>
</feature>
<feature type="sequence variant" id="VAR_087144" description="In PBD5A." evidence="8">
    <original>C</original>
    <variation>R</variation>
    <location>
        <position position="247"/>
    </location>
</feature>
<reference key="1">
    <citation type="journal article" date="1992" name="Science">
        <title>A human gene responsible for Zellweger syndrome that affects peroxisome assembly.</title>
        <authorList>
            <person name="Shimozawa N."/>
            <person name="Tsukamoto T."/>
            <person name="Suzuki Y."/>
            <person name="Orii T."/>
            <person name="Shirayoshi Y."/>
            <person name="Mori T."/>
            <person name="Fujiki Y."/>
        </authorList>
    </citation>
    <scope>NUCLEOTIDE SEQUENCE [MRNA]</scope>
    <scope>VARIANT ARG-184</scope>
    <scope>INVOLVEMENT IN PBD5A</scope>
    <source>
        <tissue>Liver</tissue>
    </source>
</reference>
<reference key="2">
    <citation type="journal article" date="2000" name="Biochem. Biophys. Res. Commun.">
        <title>Genomic organization and characterization of human PEX2 encoding a 35-kDa peroxisomal membrane protein.</title>
        <authorList>
            <person name="Biermanns M."/>
            <person name="Gaertner J."/>
        </authorList>
    </citation>
    <scope>NUCLEOTIDE SEQUENCE [GENOMIC DNA]</scope>
    <scope>VARIANT ARG-184</scope>
</reference>
<reference key="3">
    <citation type="submission" date="1992-02" db="EMBL/GenBank/DDBJ databases">
        <authorList>
            <person name="Gartner J."/>
        </authorList>
    </citation>
    <scope>NUCLEOTIDE SEQUENCE [MRNA]</scope>
    <scope>VARIANT ARG-184</scope>
    <source>
        <tissue>Liver</tissue>
    </source>
</reference>
<reference key="4">
    <citation type="journal article" date="2006" name="Nature">
        <title>DNA sequence and analysis of human chromosome 8.</title>
        <authorList>
            <person name="Nusbaum C."/>
            <person name="Mikkelsen T.S."/>
            <person name="Zody M.C."/>
            <person name="Asakawa S."/>
            <person name="Taudien S."/>
            <person name="Garber M."/>
            <person name="Kodira C.D."/>
            <person name="Schueler M.G."/>
            <person name="Shimizu A."/>
            <person name="Whittaker C.A."/>
            <person name="Chang J.L."/>
            <person name="Cuomo C.A."/>
            <person name="Dewar K."/>
            <person name="FitzGerald M.G."/>
            <person name="Yang X."/>
            <person name="Allen N.R."/>
            <person name="Anderson S."/>
            <person name="Asakawa T."/>
            <person name="Blechschmidt K."/>
            <person name="Bloom T."/>
            <person name="Borowsky M.L."/>
            <person name="Butler J."/>
            <person name="Cook A."/>
            <person name="Corum B."/>
            <person name="DeArellano K."/>
            <person name="DeCaprio D."/>
            <person name="Dooley K.T."/>
            <person name="Dorris L. III"/>
            <person name="Engels R."/>
            <person name="Gloeckner G."/>
            <person name="Hafez N."/>
            <person name="Hagopian D.S."/>
            <person name="Hall J.L."/>
            <person name="Ishikawa S.K."/>
            <person name="Jaffe D.B."/>
            <person name="Kamat A."/>
            <person name="Kudoh J."/>
            <person name="Lehmann R."/>
            <person name="Lokitsang T."/>
            <person name="Macdonald P."/>
            <person name="Major J.E."/>
            <person name="Matthews C.D."/>
            <person name="Mauceli E."/>
            <person name="Menzel U."/>
            <person name="Mihalev A.H."/>
            <person name="Minoshima S."/>
            <person name="Murayama Y."/>
            <person name="Naylor J.W."/>
            <person name="Nicol R."/>
            <person name="Nguyen C."/>
            <person name="O'Leary S.B."/>
            <person name="O'Neill K."/>
            <person name="Parker S.C.J."/>
            <person name="Polley A."/>
            <person name="Raymond C.K."/>
            <person name="Reichwald K."/>
            <person name="Rodriguez J."/>
            <person name="Sasaki T."/>
            <person name="Schilhabel M."/>
            <person name="Siddiqui R."/>
            <person name="Smith C.L."/>
            <person name="Sneddon T.P."/>
            <person name="Talamas J.A."/>
            <person name="Tenzin P."/>
            <person name="Topham K."/>
            <person name="Venkataraman V."/>
            <person name="Wen G."/>
            <person name="Yamazaki S."/>
            <person name="Young S.K."/>
            <person name="Zeng Q."/>
            <person name="Zimmer A.R."/>
            <person name="Rosenthal A."/>
            <person name="Birren B.W."/>
            <person name="Platzer M."/>
            <person name="Shimizu N."/>
            <person name="Lander E.S."/>
        </authorList>
    </citation>
    <scope>NUCLEOTIDE SEQUENCE [LARGE SCALE GENOMIC DNA]</scope>
</reference>
<reference key="5">
    <citation type="journal article" date="2004" name="Genome Res.">
        <title>The status, quality, and expansion of the NIH full-length cDNA project: the Mammalian Gene Collection (MGC).</title>
        <authorList>
            <consortium name="The MGC Project Team"/>
        </authorList>
    </citation>
    <scope>NUCLEOTIDE SEQUENCE [LARGE SCALE MRNA]</scope>
    <scope>VARIANT ARG-184</scope>
    <source>
        <tissue>Kidney</tissue>
        <tissue>Liver</tissue>
    </source>
</reference>
<reference key="6">
    <citation type="journal article" date="2003" name="Eur. J. Cell Biol.">
        <title>The peroxisomal membrane targeting elements of human peroxin 2 (PEX2).</title>
        <authorList>
            <person name="Biermanns M."/>
            <person name="von Laar J."/>
            <person name="Brosius U."/>
            <person name="Gaertner J."/>
        </authorList>
    </citation>
    <scope>SUBCELLULAR LOCATION</scope>
</reference>
<reference key="7">
    <citation type="journal article" date="1992" name="FEBS Lett.">
        <title>Ring finger in the peroxisome assembly factor-1.</title>
        <authorList>
            <person name="Patarca R."/>
            <person name="Fletcher M.A."/>
        </authorList>
    </citation>
    <scope>DOMAIN RING FINGER</scope>
</reference>
<reference key="8">
    <citation type="journal article" date="2009" name="Science">
        <title>Lysine acetylation targets protein complexes and co-regulates major cellular functions.</title>
        <authorList>
            <person name="Choudhary C."/>
            <person name="Kumar C."/>
            <person name="Gnad F."/>
            <person name="Nielsen M.L."/>
            <person name="Rehman M."/>
            <person name="Walther T.C."/>
            <person name="Olsen J.V."/>
            <person name="Mann M."/>
        </authorList>
    </citation>
    <scope>ACETYLATION [LARGE SCALE ANALYSIS] AT LYS-84</scope>
    <scope>IDENTIFICATION BY MASS SPECTROMETRY [LARGE SCALE ANALYSIS]</scope>
</reference>
<reference key="9">
    <citation type="journal article" date="2014" name="J. Biol. Chem.">
        <title>Distinct modes of ubiquitination of peroxisome-targeting signal type 1 (PTS1) receptor Pex5p regulate PTS1 protein import.</title>
        <authorList>
            <person name="Okumoto K."/>
            <person name="Noda H."/>
            <person name="Fujiki Y."/>
        </authorList>
    </citation>
    <scope>FUNCTION</scope>
    <scope>PATHWAY</scope>
    <scope>IDENTIFICATION IN THE PEX2-PEX10-PEX12 RETROTRANSLOCATION CHANNEL</scope>
</reference>
<reference key="10">
    <citation type="journal article" date="2016" name="J. Cell Biol.">
        <title>PEX2 is the E3 ubiquitin ligase required for pexophagy during starvation.</title>
        <authorList>
            <person name="Sargent G."/>
            <person name="van Zutphen T."/>
            <person name="Shatseva T."/>
            <person name="Zhang L."/>
            <person name="Di Giovanni V."/>
            <person name="Bandsma R."/>
            <person name="Kim P.K."/>
        </authorList>
    </citation>
    <scope>FUNCTION</scope>
    <scope>PATHWAY</scope>
</reference>
<reference key="11">
    <citation type="journal article" date="2021" name="Nat. Metab.">
        <title>Peroxisomal beta-oxidation acts as a sensor for intracellular fatty acids and regulates lipolysis.</title>
        <authorList>
            <person name="Ding L."/>
            <person name="Sun W."/>
            <person name="Balaz M."/>
            <person name="He A."/>
            <person name="Klug M."/>
            <person name="Wieland S."/>
            <person name="Caiazzo R."/>
            <person name="Raverdy V."/>
            <person name="Pattou F."/>
            <person name="Lefebvre P."/>
            <person name="Lodhi I.J."/>
            <person name="Staels B."/>
            <person name="Heim M."/>
            <person name="Wolfrum C."/>
        </authorList>
    </citation>
    <scope>FUNCTION</scope>
    <scope>CATALYTIC ACTIVITY</scope>
    <scope>DISULFIDE BONDS</scope>
</reference>
<reference key="12">
    <citation type="journal article" date="1999" name="J. Med. Genet.">
        <title>Defective PEX gene products correlate with the protein import, biochemical abnormalities, and phenotypic heterogeneity in peroxisome biogenesis disorders.</title>
        <authorList>
            <person name="Shimozawa N."/>
            <person name="Imamura A."/>
            <person name="Zhang Z."/>
            <person name="Suzuki Y."/>
            <person name="Orii T."/>
            <person name="Tsukamoto T."/>
            <person name="Osumi T."/>
            <person name="Fujiki Y."/>
            <person name="Wanders R.J.A."/>
            <person name="Besley G."/>
            <person name="Kondo N."/>
        </authorList>
    </citation>
    <scope>VARIANT PBD5B LYS-55</scope>
</reference>
<reference key="13">
    <citation type="journal article" date="2004" name="Pediatr. Res.">
        <title>Novel mutations in the PEX2 gene of four unrelated patients with a peroxisome biogenesis disorder.</title>
        <authorList>
            <person name="Gootjes J."/>
            <person name="Elpeleg O."/>
            <person name="Eyskens F."/>
            <person name="Mandel H."/>
            <person name="Mitanchez D."/>
            <person name="Shimozawa N."/>
            <person name="Suzuki Y."/>
            <person name="Waterham H.R."/>
            <person name="Wanders R.J."/>
        </authorList>
    </citation>
    <scope>VARIANTS PBD5A 119-ARG--LEU-305 DEL AND ARG-247</scope>
    <scope>VARIANT PBD5B 223-TRP--LEU-305 DEL</scope>
</reference>
<reference key="14">
    <citation type="journal article" date="2006" name="Hum. Mutat.">
        <title>Identification of novel mutations in PEX2, PEX6, PEX10, PEX12, and PEX13 in Zellweger spectrum patients.</title>
        <authorList>
            <person name="Krause C."/>
            <person name="Rosewich H."/>
            <person name="Thanos M."/>
            <person name="Gaertner J."/>
        </authorList>
    </citation>
    <scope>VARIANT PBD5A 39-GLN--LEU-305 DEL</scope>
</reference>
<reference key="15">
    <citation type="journal article" date="2011" name="Orphanet J. Rare Dis.">
        <title>Autosomal recessive cerebellar ataxia caused by mutations in the PEX2 gene.</title>
        <authorList>
            <person name="Sevin C."/>
            <person name="Ferdinandusse S."/>
            <person name="Waterham H.R."/>
            <person name="Wanders R.J."/>
            <person name="Aubourg P."/>
        </authorList>
    </citation>
    <scope>INVOLVEMENT IN PBD5B</scope>
</reference>
<reference key="16">
    <citation type="journal article" date="2012" name="JIMD Rep.">
        <title>Zellweger spectrum disorder with mild phenotype caused by PEX2 gene mutations.</title>
        <authorList>
            <person name="Mignarri A."/>
            <person name="Vinciguerra C."/>
            <person name="Giorgio A."/>
            <person name="Ferdinandusse S."/>
            <person name="Waterham H."/>
            <person name="Wanders R."/>
            <person name="Bertini E."/>
            <person name="Dotti M.T."/>
            <person name="Federico A."/>
        </authorList>
    </citation>
    <scope>VARIANT PBD5B 119-ARG--LEU-305 DEL</scope>
</reference>
<name>PEX2_HUMAN</name>
<proteinExistence type="evidence at protein level"/>